<evidence type="ECO:0000250" key="1"/>
<evidence type="ECO:0000255" key="2">
    <source>
        <dbReference type="HAMAP-Rule" id="MF_00103"/>
    </source>
</evidence>
<accession>B6I3L2</accession>
<feature type="initiator methionine" description="Removed" evidence="1">
    <location>
        <position position="1"/>
    </location>
</feature>
<feature type="chain" id="PRO_1000094044" description="Formamidopyrimidine-DNA glycosylase">
    <location>
        <begin position="2"/>
        <end position="269"/>
    </location>
</feature>
<feature type="zinc finger region" description="FPG-type" evidence="2">
    <location>
        <begin position="235"/>
        <end position="269"/>
    </location>
</feature>
<feature type="active site" description="Schiff-base intermediate with DNA" evidence="2">
    <location>
        <position position="2"/>
    </location>
</feature>
<feature type="active site" description="Proton donor" evidence="2">
    <location>
        <position position="3"/>
    </location>
</feature>
<feature type="active site" description="Proton donor; for beta-elimination activity" evidence="2">
    <location>
        <position position="57"/>
    </location>
</feature>
<feature type="active site" description="Proton donor; for delta-elimination activity" evidence="2">
    <location>
        <position position="259"/>
    </location>
</feature>
<feature type="binding site" evidence="2">
    <location>
        <position position="90"/>
    </location>
    <ligand>
        <name>DNA</name>
        <dbReference type="ChEBI" id="CHEBI:16991"/>
    </ligand>
</feature>
<feature type="binding site" evidence="2">
    <location>
        <position position="109"/>
    </location>
    <ligand>
        <name>DNA</name>
        <dbReference type="ChEBI" id="CHEBI:16991"/>
    </ligand>
</feature>
<feature type="binding site" evidence="2">
    <location>
        <position position="150"/>
    </location>
    <ligand>
        <name>DNA</name>
        <dbReference type="ChEBI" id="CHEBI:16991"/>
    </ligand>
</feature>
<keyword id="KW-0227">DNA damage</keyword>
<keyword id="KW-0234">DNA repair</keyword>
<keyword id="KW-0238">DNA-binding</keyword>
<keyword id="KW-0326">Glycosidase</keyword>
<keyword id="KW-0378">Hydrolase</keyword>
<keyword id="KW-0456">Lyase</keyword>
<keyword id="KW-0479">Metal-binding</keyword>
<keyword id="KW-0511">Multifunctional enzyme</keyword>
<keyword id="KW-0862">Zinc</keyword>
<keyword id="KW-0863">Zinc-finger</keyword>
<comment type="function">
    <text evidence="2">Involved in base excision repair of DNA damaged by oxidation or by mutagenic agents. Acts as a DNA glycosylase that recognizes and removes damaged bases. Has a preference for oxidized purines, such as 7,8-dihydro-8-oxoguanine (8-oxoG). Has AP (apurinic/apyrimidinic) lyase activity and introduces nicks in the DNA strand. Cleaves the DNA backbone by beta-delta elimination to generate a single-strand break at the site of the removed base with both 3'- and 5'-phosphates.</text>
</comment>
<comment type="catalytic activity">
    <reaction evidence="2">
        <text>Hydrolysis of DNA containing ring-opened 7-methylguanine residues, releasing 2,6-diamino-4-hydroxy-5-(N-methyl)formamidopyrimidine.</text>
        <dbReference type="EC" id="3.2.2.23"/>
    </reaction>
</comment>
<comment type="catalytic activity">
    <reaction evidence="2">
        <text>2'-deoxyribonucleotide-(2'-deoxyribose 5'-phosphate)-2'-deoxyribonucleotide-DNA = a 3'-end 2'-deoxyribonucleotide-(2,3-dehydro-2,3-deoxyribose 5'-phosphate)-DNA + a 5'-end 5'-phospho-2'-deoxyribonucleoside-DNA + H(+)</text>
        <dbReference type="Rhea" id="RHEA:66592"/>
        <dbReference type="Rhea" id="RHEA-COMP:13180"/>
        <dbReference type="Rhea" id="RHEA-COMP:16897"/>
        <dbReference type="Rhea" id="RHEA-COMP:17067"/>
        <dbReference type="ChEBI" id="CHEBI:15378"/>
        <dbReference type="ChEBI" id="CHEBI:136412"/>
        <dbReference type="ChEBI" id="CHEBI:157695"/>
        <dbReference type="ChEBI" id="CHEBI:167181"/>
        <dbReference type="EC" id="4.2.99.18"/>
    </reaction>
</comment>
<comment type="cofactor">
    <cofactor evidence="2">
        <name>Zn(2+)</name>
        <dbReference type="ChEBI" id="CHEBI:29105"/>
    </cofactor>
    <text evidence="2">Binds 1 zinc ion per subunit.</text>
</comment>
<comment type="subunit">
    <text evidence="2">Monomer.</text>
</comment>
<comment type="similarity">
    <text evidence="2">Belongs to the FPG family.</text>
</comment>
<dbReference type="EC" id="3.2.2.23" evidence="2"/>
<dbReference type="EC" id="4.2.99.18" evidence="2"/>
<dbReference type="EMBL" id="AP009240">
    <property type="protein sequence ID" value="BAG79439.1"/>
    <property type="molecule type" value="Genomic_DNA"/>
</dbReference>
<dbReference type="RefSeq" id="WP_001114533.1">
    <property type="nucleotide sequence ID" value="NC_011415.1"/>
</dbReference>
<dbReference type="SMR" id="B6I3L2"/>
<dbReference type="GeneID" id="93778348"/>
<dbReference type="KEGG" id="ecy:ECSE_3915"/>
<dbReference type="HOGENOM" id="CLU_038423_1_1_6"/>
<dbReference type="Proteomes" id="UP000008199">
    <property type="component" value="Chromosome"/>
</dbReference>
<dbReference type="GO" id="GO:0034039">
    <property type="term" value="F:8-oxo-7,8-dihydroguanine DNA N-glycosylase activity"/>
    <property type="evidence" value="ECO:0007669"/>
    <property type="project" value="TreeGrafter"/>
</dbReference>
<dbReference type="GO" id="GO:0140078">
    <property type="term" value="F:class I DNA-(apurinic or apyrimidinic site) endonuclease activity"/>
    <property type="evidence" value="ECO:0007669"/>
    <property type="project" value="UniProtKB-EC"/>
</dbReference>
<dbReference type="GO" id="GO:0003684">
    <property type="term" value="F:damaged DNA binding"/>
    <property type="evidence" value="ECO:0007669"/>
    <property type="project" value="InterPro"/>
</dbReference>
<dbReference type="GO" id="GO:0008270">
    <property type="term" value="F:zinc ion binding"/>
    <property type="evidence" value="ECO:0007669"/>
    <property type="project" value="UniProtKB-UniRule"/>
</dbReference>
<dbReference type="GO" id="GO:0006284">
    <property type="term" value="P:base-excision repair"/>
    <property type="evidence" value="ECO:0007669"/>
    <property type="project" value="InterPro"/>
</dbReference>
<dbReference type="CDD" id="cd08966">
    <property type="entry name" value="EcFpg-like_N"/>
    <property type="match status" value="1"/>
</dbReference>
<dbReference type="FunFam" id="1.10.8.50:FF:000003">
    <property type="entry name" value="Formamidopyrimidine-DNA glycosylase"/>
    <property type="match status" value="1"/>
</dbReference>
<dbReference type="FunFam" id="3.20.190.10:FF:000001">
    <property type="entry name" value="Formamidopyrimidine-DNA glycosylase"/>
    <property type="match status" value="1"/>
</dbReference>
<dbReference type="Gene3D" id="1.10.8.50">
    <property type="match status" value="1"/>
</dbReference>
<dbReference type="Gene3D" id="3.20.190.10">
    <property type="entry name" value="MutM-like, N-terminal"/>
    <property type="match status" value="1"/>
</dbReference>
<dbReference type="HAMAP" id="MF_00103">
    <property type="entry name" value="Fapy_DNA_glycosyl"/>
    <property type="match status" value="1"/>
</dbReference>
<dbReference type="InterPro" id="IPR015886">
    <property type="entry name" value="DNA_glyclase/AP_lyase_DNA-bd"/>
</dbReference>
<dbReference type="InterPro" id="IPR015887">
    <property type="entry name" value="DNA_glyclase_Znf_dom_DNA_BS"/>
</dbReference>
<dbReference type="InterPro" id="IPR020629">
    <property type="entry name" value="Formamido-pyr_DNA_Glyclase"/>
</dbReference>
<dbReference type="InterPro" id="IPR012319">
    <property type="entry name" value="FPG_cat"/>
</dbReference>
<dbReference type="InterPro" id="IPR035937">
    <property type="entry name" value="MutM-like_N-ter"/>
</dbReference>
<dbReference type="InterPro" id="IPR010979">
    <property type="entry name" value="Ribosomal_uS13-like_H2TH"/>
</dbReference>
<dbReference type="InterPro" id="IPR000214">
    <property type="entry name" value="Znf_DNA_glyclase/AP_lyase"/>
</dbReference>
<dbReference type="InterPro" id="IPR010663">
    <property type="entry name" value="Znf_FPG/IleRS"/>
</dbReference>
<dbReference type="NCBIfam" id="TIGR00577">
    <property type="entry name" value="fpg"/>
    <property type="match status" value="1"/>
</dbReference>
<dbReference type="NCBIfam" id="NF002211">
    <property type="entry name" value="PRK01103.1"/>
    <property type="match status" value="1"/>
</dbReference>
<dbReference type="PANTHER" id="PTHR22993">
    <property type="entry name" value="FORMAMIDOPYRIMIDINE-DNA GLYCOSYLASE"/>
    <property type="match status" value="1"/>
</dbReference>
<dbReference type="PANTHER" id="PTHR22993:SF9">
    <property type="entry name" value="FORMAMIDOPYRIMIDINE-DNA GLYCOSYLASE"/>
    <property type="match status" value="1"/>
</dbReference>
<dbReference type="Pfam" id="PF01149">
    <property type="entry name" value="Fapy_DNA_glyco"/>
    <property type="match status" value="1"/>
</dbReference>
<dbReference type="Pfam" id="PF06831">
    <property type="entry name" value="H2TH"/>
    <property type="match status" value="1"/>
</dbReference>
<dbReference type="Pfam" id="PF06827">
    <property type="entry name" value="zf-FPG_IleRS"/>
    <property type="match status" value="1"/>
</dbReference>
<dbReference type="SMART" id="SM00898">
    <property type="entry name" value="Fapy_DNA_glyco"/>
    <property type="match status" value="1"/>
</dbReference>
<dbReference type="SMART" id="SM01232">
    <property type="entry name" value="H2TH"/>
    <property type="match status" value="1"/>
</dbReference>
<dbReference type="SUPFAM" id="SSF57716">
    <property type="entry name" value="Glucocorticoid receptor-like (DNA-binding domain)"/>
    <property type="match status" value="1"/>
</dbReference>
<dbReference type="SUPFAM" id="SSF81624">
    <property type="entry name" value="N-terminal domain of MutM-like DNA repair proteins"/>
    <property type="match status" value="1"/>
</dbReference>
<dbReference type="SUPFAM" id="SSF46946">
    <property type="entry name" value="S13-like H2TH domain"/>
    <property type="match status" value="1"/>
</dbReference>
<dbReference type="PROSITE" id="PS51068">
    <property type="entry name" value="FPG_CAT"/>
    <property type="match status" value="1"/>
</dbReference>
<dbReference type="PROSITE" id="PS01242">
    <property type="entry name" value="ZF_FPG_1"/>
    <property type="match status" value="1"/>
</dbReference>
<dbReference type="PROSITE" id="PS51066">
    <property type="entry name" value="ZF_FPG_2"/>
    <property type="match status" value="1"/>
</dbReference>
<organism>
    <name type="scientific">Escherichia coli (strain SE11)</name>
    <dbReference type="NCBI Taxonomy" id="409438"/>
    <lineage>
        <taxon>Bacteria</taxon>
        <taxon>Pseudomonadati</taxon>
        <taxon>Pseudomonadota</taxon>
        <taxon>Gammaproteobacteria</taxon>
        <taxon>Enterobacterales</taxon>
        <taxon>Enterobacteriaceae</taxon>
        <taxon>Escherichia</taxon>
    </lineage>
</organism>
<gene>
    <name evidence="2" type="primary">mutM</name>
    <name evidence="2" type="synonym">fpg</name>
    <name type="ordered locus">ECSE_3915</name>
</gene>
<reference key="1">
    <citation type="journal article" date="2008" name="DNA Res.">
        <title>Complete genome sequence and comparative analysis of the wild-type commensal Escherichia coli strain SE11 isolated from a healthy adult.</title>
        <authorList>
            <person name="Oshima K."/>
            <person name="Toh H."/>
            <person name="Ogura Y."/>
            <person name="Sasamoto H."/>
            <person name="Morita H."/>
            <person name="Park S.-H."/>
            <person name="Ooka T."/>
            <person name="Iyoda S."/>
            <person name="Taylor T.D."/>
            <person name="Hayashi T."/>
            <person name="Itoh K."/>
            <person name="Hattori M."/>
        </authorList>
    </citation>
    <scope>NUCLEOTIDE SEQUENCE [LARGE SCALE GENOMIC DNA]</scope>
    <source>
        <strain>SE11</strain>
    </source>
</reference>
<proteinExistence type="inferred from homology"/>
<sequence length="269" mass="30260">MPELPEVETSRRGIEPHLVGATILHAVVRNGRLRWPVSEEIYRLSDQPVLSVQRRAKYLLLELPEGWIIIHLGMSGSLRILPEELPPEKHDHVDLVMSNGKVLRYTDPRRFGAWLWTKELEGHNVLAHLGPEPLSDDFNGEYLHQKCAKKKTAIKPWLMDNKLVVGVGNIYASESLFAAGIHPDRLASSLSLAECELLARVIKAVLLRSIEQGGTTLKDFLQSDGKPGYFAQELQVYGRKGEPCRVCGTPIVATKHAQRATFYCRQCQK</sequence>
<protein>
    <recommendedName>
        <fullName evidence="2">Formamidopyrimidine-DNA glycosylase</fullName>
        <shortName evidence="2">Fapy-DNA glycosylase</shortName>
        <ecNumber evidence="2">3.2.2.23</ecNumber>
    </recommendedName>
    <alternativeName>
        <fullName evidence="2">DNA-(apurinic or apyrimidinic site) lyase MutM</fullName>
        <shortName evidence="2">AP lyase MutM</shortName>
        <ecNumber evidence="2">4.2.99.18</ecNumber>
    </alternativeName>
</protein>
<name>FPG_ECOSE</name>